<accession>A3NZM4</accession>
<name>MRAZ_BURP0</name>
<reference key="1">
    <citation type="journal article" date="2010" name="Genome Biol. Evol.">
        <title>Continuing evolution of Burkholderia mallei through genome reduction and large-scale rearrangements.</title>
        <authorList>
            <person name="Losada L."/>
            <person name="Ronning C.M."/>
            <person name="DeShazer D."/>
            <person name="Woods D."/>
            <person name="Fedorova N."/>
            <person name="Kim H.S."/>
            <person name="Shabalina S.A."/>
            <person name="Pearson T.R."/>
            <person name="Brinkac L."/>
            <person name="Tan P."/>
            <person name="Nandi T."/>
            <person name="Crabtree J."/>
            <person name="Badger J."/>
            <person name="Beckstrom-Sternberg S."/>
            <person name="Saqib M."/>
            <person name="Schutzer S.E."/>
            <person name="Keim P."/>
            <person name="Nierman W.C."/>
        </authorList>
    </citation>
    <scope>NUCLEOTIDE SEQUENCE [LARGE SCALE GENOMIC DNA]</scope>
    <source>
        <strain>1106a</strain>
    </source>
</reference>
<gene>
    <name evidence="1" type="primary">mraZ</name>
    <name type="ordered locus">BURPS1106A_3559</name>
</gene>
<comment type="subunit">
    <text evidence="1">Forms oligomers.</text>
</comment>
<comment type="subcellular location">
    <subcellularLocation>
        <location evidence="1">Cytoplasm</location>
        <location evidence="1">Nucleoid</location>
    </subcellularLocation>
</comment>
<comment type="similarity">
    <text evidence="1">Belongs to the MraZ family.</text>
</comment>
<organism>
    <name type="scientific">Burkholderia pseudomallei (strain 1106a)</name>
    <dbReference type="NCBI Taxonomy" id="357348"/>
    <lineage>
        <taxon>Bacteria</taxon>
        <taxon>Pseudomonadati</taxon>
        <taxon>Pseudomonadota</taxon>
        <taxon>Betaproteobacteria</taxon>
        <taxon>Burkholderiales</taxon>
        <taxon>Burkholderiaceae</taxon>
        <taxon>Burkholderia</taxon>
        <taxon>pseudomallei group</taxon>
    </lineage>
</organism>
<dbReference type="EMBL" id="CP000572">
    <property type="protein sequence ID" value="ABN92430.1"/>
    <property type="molecule type" value="Genomic_DNA"/>
</dbReference>
<dbReference type="RefSeq" id="WP_004194130.1">
    <property type="nucleotide sequence ID" value="NC_009076.1"/>
</dbReference>
<dbReference type="SMR" id="A3NZM4"/>
<dbReference type="GeneID" id="93061636"/>
<dbReference type="KEGG" id="bpl:BURPS1106A_3559"/>
<dbReference type="HOGENOM" id="CLU_107907_2_1_4"/>
<dbReference type="Proteomes" id="UP000006738">
    <property type="component" value="Chromosome I"/>
</dbReference>
<dbReference type="GO" id="GO:0005737">
    <property type="term" value="C:cytoplasm"/>
    <property type="evidence" value="ECO:0007669"/>
    <property type="project" value="UniProtKB-UniRule"/>
</dbReference>
<dbReference type="GO" id="GO:0009295">
    <property type="term" value="C:nucleoid"/>
    <property type="evidence" value="ECO:0007669"/>
    <property type="project" value="UniProtKB-SubCell"/>
</dbReference>
<dbReference type="GO" id="GO:0003700">
    <property type="term" value="F:DNA-binding transcription factor activity"/>
    <property type="evidence" value="ECO:0007669"/>
    <property type="project" value="UniProtKB-UniRule"/>
</dbReference>
<dbReference type="GO" id="GO:0000976">
    <property type="term" value="F:transcription cis-regulatory region binding"/>
    <property type="evidence" value="ECO:0007669"/>
    <property type="project" value="TreeGrafter"/>
</dbReference>
<dbReference type="GO" id="GO:2000143">
    <property type="term" value="P:negative regulation of DNA-templated transcription initiation"/>
    <property type="evidence" value="ECO:0007669"/>
    <property type="project" value="TreeGrafter"/>
</dbReference>
<dbReference type="CDD" id="cd16321">
    <property type="entry name" value="MraZ_C"/>
    <property type="match status" value="1"/>
</dbReference>
<dbReference type="CDD" id="cd16320">
    <property type="entry name" value="MraZ_N"/>
    <property type="match status" value="1"/>
</dbReference>
<dbReference type="Gene3D" id="3.40.1550.20">
    <property type="entry name" value="Transcriptional regulator MraZ domain"/>
    <property type="match status" value="1"/>
</dbReference>
<dbReference type="HAMAP" id="MF_01008">
    <property type="entry name" value="MraZ"/>
    <property type="match status" value="1"/>
</dbReference>
<dbReference type="InterPro" id="IPR003444">
    <property type="entry name" value="MraZ"/>
</dbReference>
<dbReference type="InterPro" id="IPR035644">
    <property type="entry name" value="MraZ_C"/>
</dbReference>
<dbReference type="InterPro" id="IPR020603">
    <property type="entry name" value="MraZ_dom"/>
</dbReference>
<dbReference type="InterPro" id="IPR035642">
    <property type="entry name" value="MraZ_N"/>
</dbReference>
<dbReference type="InterPro" id="IPR038619">
    <property type="entry name" value="MraZ_sf"/>
</dbReference>
<dbReference type="InterPro" id="IPR007159">
    <property type="entry name" value="SpoVT-AbrB_dom"/>
</dbReference>
<dbReference type="InterPro" id="IPR037914">
    <property type="entry name" value="SpoVT-AbrB_sf"/>
</dbReference>
<dbReference type="NCBIfam" id="TIGR00242">
    <property type="entry name" value="division/cell wall cluster transcriptional repressor MraZ"/>
    <property type="match status" value="1"/>
</dbReference>
<dbReference type="PANTHER" id="PTHR34701">
    <property type="entry name" value="TRANSCRIPTIONAL REGULATOR MRAZ"/>
    <property type="match status" value="1"/>
</dbReference>
<dbReference type="PANTHER" id="PTHR34701:SF1">
    <property type="entry name" value="TRANSCRIPTIONAL REGULATOR MRAZ"/>
    <property type="match status" value="1"/>
</dbReference>
<dbReference type="Pfam" id="PF02381">
    <property type="entry name" value="MraZ"/>
    <property type="match status" value="2"/>
</dbReference>
<dbReference type="SUPFAM" id="SSF89447">
    <property type="entry name" value="AbrB/MazE/MraZ-like"/>
    <property type="match status" value="1"/>
</dbReference>
<dbReference type="PROSITE" id="PS51740">
    <property type="entry name" value="SPOVT_ABRB"/>
    <property type="match status" value="2"/>
</dbReference>
<proteinExistence type="inferred from homology"/>
<feature type="chain" id="PRO_1000062856" description="Transcriptional regulator MraZ">
    <location>
        <begin position="1"/>
        <end position="142"/>
    </location>
</feature>
<feature type="domain" description="SpoVT-AbrB 1" evidence="2">
    <location>
        <begin position="5"/>
        <end position="51"/>
    </location>
</feature>
<feature type="domain" description="SpoVT-AbrB 2" evidence="2">
    <location>
        <begin position="77"/>
        <end position="120"/>
    </location>
</feature>
<keyword id="KW-0963">Cytoplasm</keyword>
<keyword id="KW-0238">DNA-binding</keyword>
<keyword id="KW-0677">Repeat</keyword>
<keyword id="KW-0804">Transcription</keyword>
<keyword id="KW-0805">Transcription regulation</keyword>
<sequence length="142" mass="15870">MFQGASALTLDAKGRMSVPSRYREALQGQAEGRVTVTKHPDGCLLLFPRPEWEVFRAKIAALPMDAHWWRRIFLGNAMDVDLDSAGRILVSPELRMAAGLEKEVMLLGMGSHFELWDAQTYTAKEQAAMAQGMPEALKNFTF</sequence>
<protein>
    <recommendedName>
        <fullName>Transcriptional regulator MraZ</fullName>
    </recommendedName>
</protein>
<evidence type="ECO:0000255" key="1">
    <source>
        <dbReference type="HAMAP-Rule" id="MF_01008"/>
    </source>
</evidence>
<evidence type="ECO:0000255" key="2">
    <source>
        <dbReference type="PROSITE-ProRule" id="PRU01076"/>
    </source>
</evidence>